<gene>
    <name evidence="8" type="primary">TOL2</name>
    <name evidence="7" type="synonym">TOM1E</name>
    <name evidence="11" type="ordered locus">At1g06210</name>
    <name evidence="12" type="ORF">F9P14.7</name>
</gene>
<feature type="chain" id="PRO_0000440677" description="TOM1-like protein 2">
    <location>
        <begin position="1"/>
        <end position="383"/>
    </location>
</feature>
<feature type="domain" description="VHS" evidence="1">
    <location>
        <begin position="45"/>
        <end position="178"/>
    </location>
</feature>
<feature type="domain" description="GAT" evidence="2">
    <location>
        <begin position="223"/>
        <end position="310"/>
    </location>
</feature>
<feature type="region of interest" description="Disordered" evidence="3">
    <location>
        <begin position="305"/>
        <end position="383"/>
    </location>
</feature>
<feature type="compositionally biased region" description="Basic and acidic residues" evidence="3">
    <location>
        <begin position="306"/>
        <end position="316"/>
    </location>
</feature>
<feature type="compositionally biased region" description="Basic and acidic residues" evidence="3">
    <location>
        <begin position="339"/>
        <end position="354"/>
    </location>
</feature>
<feature type="modified residue" description="Phosphoserine" evidence="13 14">
    <location>
        <position position="377"/>
    </location>
</feature>
<feature type="modified residue" description="Phosphoserine" evidence="13 14">
    <location>
        <position position="378"/>
    </location>
</feature>
<feature type="splice variant" id="VSP_058983" description="In isoform 2.">
    <original>DDLTVSLMEKCKQSQPLIQMIIE</original>
    <variation>VVATLSAHLTFVIFLNKCLWNMD</variation>
    <location>
        <begin position="257"/>
        <end position="279"/>
    </location>
</feature>
<feature type="splice variant" id="VSP_058984" description="In isoform 2.">
    <location>
        <begin position="280"/>
        <end position="383"/>
    </location>
</feature>
<reference key="1">
    <citation type="journal article" date="2000" name="Nature">
        <title>Sequence and analysis of chromosome 1 of the plant Arabidopsis thaliana.</title>
        <authorList>
            <person name="Theologis A."/>
            <person name="Ecker J.R."/>
            <person name="Palm C.J."/>
            <person name="Federspiel N.A."/>
            <person name="Kaul S."/>
            <person name="White O."/>
            <person name="Alonso J."/>
            <person name="Altafi H."/>
            <person name="Araujo R."/>
            <person name="Bowman C.L."/>
            <person name="Brooks S.Y."/>
            <person name="Buehler E."/>
            <person name="Chan A."/>
            <person name="Chao Q."/>
            <person name="Chen H."/>
            <person name="Cheuk R.F."/>
            <person name="Chin C.W."/>
            <person name="Chung M.K."/>
            <person name="Conn L."/>
            <person name="Conway A.B."/>
            <person name="Conway A.R."/>
            <person name="Creasy T.H."/>
            <person name="Dewar K."/>
            <person name="Dunn P."/>
            <person name="Etgu P."/>
            <person name="Feldblyum T.V."/>
            <person name="Feng J.-D."/>
            <person name="Fong B."/>
            <person name="Fujii C.Y."/>
            <person name="Gill J.E."/>
            <person name="Goldsmith A.D."/>
            <person name="Haas B."/>
            <person name="Hansen N.F."/>
            <person name="Hughes B."/>
            <person name="Huizar L."/>
            <person name="Hunter J.L."/>
            <person name="Jenkins J."/>
            <person name="Johnson-Hopson C."/>
            <person name="Khan S."/>
            <person name="Khaykin E."/>
            <person name="Kim C.J."/>
            <person name="Koo H.L."/>
            <person name="Kremenetskaia I."/>
            <person name="Kurtz D.B."/>
            <person name="Kwan A."/>
            <person name="Lam B."/>
            <person name="Langin-Hooper S."/>
            <person name="Lee A."/>
            <person name="Lee J.M."/>
            <person name="Lenz C.A."/>
            <person name="Li J.H."/>
            <person name="Li Y.-P."/>
            <person name="Lin X."/>
            <person name="Liu S.X."/>
            <person name="Liu Z.A."/>
            <person name="Luros J.S."/>
            <person name="Maiti R."/>
            <person name="Marziali A."/>
            <person name="Militscher J."/>
            <person name="Miranda M."/>
            <person name="Nguyen M."/>
            <person name="Nierman W.C."/>
            <person name="Osborne B.I."/>
            <person name="Pai G."/>
            <person name="Peterson J."/>
            <person name="Pham P.K."/>
            <person name="Rizzo M."/>
            <person name="Rooney T."/>
            <person name="Rowley D."/>
            <person name="Sakano H."/>
            <person name="Salzberg S.L."/>
            <person name="Schwartz J.R."/>
            <person name="Shinn P."/>
            <person name="Southwick A.M."/>
            <person name="Sun H."/>
            <person name="Tallon L.J."/>
            <person name="Tambunga G."/>
            <person name="Toriumi M.J."/>
            <person name="Town C.D."/>
            <person name="Utterback T."/>
            <person name="Van Aken S."/>
            <person name="Vaysberg M."/>
            <person name="Vysotskaia V.S."/>
            <person name="Walker M."/>
            <person name="Wu D."/>
            <person name="Yu G."/>
            <person name="Fraser C.M."/>
            <person name="Venter J.C."/>
            <person name="Davis R.W."/>
        </authorList>
    </citation>
    <scope>NUCLEOTIDE SEQUENCE [LARGE SCALE GENOMIC DNA]</scope>
    <source>
        <strain>cv. Columbia</strain>
    </source>
</reference>
<reference key="2">
    <citation type="journal article" date="2017" name="Plant J.">
        <title>Araport11: a complete reannotation of the Arabidopsis thaliana reference genome.</title>
        <authorList>
            <person name="Cheng C.Y."/>
            <person name="Krishnakumar V."/>
            <person name="Chan A.P."/>
            <person name="Thibaud-Nissen F."/>
            <person name="Schobel S."/>
            <person name="Town C.D."/>
        </authorList>
    </citation>
    <scope>GENOME REANNOTATION</scope>
    <source>
        <strain>cv. Columbia</strain>
    </source>
</reference>
<reference key="3">
    <citation type="journal article" date="2003" name="Science">
        <title>Empirical analysis of transcriptional activity in the Arabidopsis genome.</title>
        <authorList>
            <person name="Yamada K."/>
            <person name="Lim J."/>
            <person name="Dale J.M."/>
            <person name="Chen H."/>
            <person name="Shinn P."/>
            <person name="Palm C.J."/>
            <person name="Southwick A.M."/>
            <person name="Wu H.C."/>
            <person name="Kim C.J."/>
            <person name="Nguyen M."/>
            <person name="Pham P.K."/>
            <person name="Cheuk R.F."/>
            <person name="Karlin-Newmann G."/>
            <person name="Liu S.X."/>
            <person name="Lam B."/>
            <person name="Sakano H."/>
            <person name="Wu T."/>
            <person name="Yu G."/>
            <person name="Miranda M."/>
            <person name="Quach H.L."/>
            <person name="Tripp M."/>
            <person name="Chang C.H."/>
            <person name="Lee J.M."/>
            <person name="Toriumi M.J."/>
            <person name="Chan M.M."/>
            <person name="Tang C.C."/>
            <person name="Onodera C.S."/>
            <person name="Deng J.M."/>
            <person name="Akiyama K."/>
            <person name="Ansari Y."/>
            <person name="Arakawa T."/>
            <person name="Banh J."/>
            <person name="Banno F."/>
            <person name="Bowser L."/>
            <person name="Brooks S.Y."/>
            <person name="Carninci P."/>
            <person name="Chao Q."/>
            <person name="Choy N."/>
            <person name="Enju A."/>
            <person name="Goldsmith A.D."/>
            <person name="Gurjal M."/>
            <person name="Hansen N.F."/>
            <person name="Hayashizaki Y."/>
            <person name="Johnson-Hopson C."/>
            <person name="Hsuan V.W."/>
            <person name="Iida K."/>
            <person name="Karnes M."/>
            <person name="Khan S."/>
            <person name="Koesema E."/>
            <person name="Ishida J."/>
            <person name="Jiang P.X."/>
            <person name="Jones T."/>
            <person name="Kawai J."/>
            <person name="Kamiya A."/>
            <person name="Meyers C."/>
            <person name="Nakajima M."/>
            <person name="Narusaka M."/>
            <person name="Seki M."/>
            <person name="Sakurai T."/>
            <person name="Satou M."/>
            <person name="Tamse R."/>
            <person name="Vaysberg M."/>
            <person name="Wallender E.K."/>
            <person name="Wong C."/>
            <person name="Yamamura Y."/>
            <person name="Yuan S."/>
            <person name="Shinozaki K."/>
            <person name="Davis R.W."/>
            <person name="Theologis A."/>
            <person name="Ecker J.R."/>
        </authorList>
    </citation>
    <scope>NUCLEOTIDE SEQUENCE [LARGE SCALE MRNA] (ISOFORM 1)</scope>
    <source>
        <strain>cv. Columbia</strain>
    </source>
</reference>
<reference key="4">
    <citation type="journal article" date="2004" name="Genome Res.">
        <title>Whole genome sequence comparisons and 'full-length' cDNA sequences: a combined approach to evaluate and improve Arabidopsis genome annotation.</title>
        <authorList>
            <person name="Castelli V."/>
            <person name="Aury J.-M."/>
            <person name="Jaillon O."/>
            <person name="Wincker P."/>
            <person name="Clepet C."/>
            <person name="Menard M."/>
            <person name="Cruaud C."/>
            <person name="Quetier F."/>
            <person name="Scarpelli C."/>
            <person name="Schaechter V."/>
            <person name="Temple G."/>
            <person name="Caboche M."/>
            <person name="Weissenbach J."/>
            <person name="Salanoubat M."/>
        </authorList>
    </citation>
    <scope>NUCLEOTIDE SEQUENCE [LARGE SCALE MRNA] (ISOFORM 2)</scope>
    <source>
        <strain>cv. Columbia</strain>
    </source>
</reference>
<reference key="5">
    <citation type="journal article" date="2006" name="Trends Plant Sci.">
        <title>Exploring the ESCRTing machinery in eukaryotes.</title>
        <authorList>
            <person name="Winter V."/>
            <person name="Hauser M.-T."/>
        </authorList>
    </citation>
    <scope>GENE FAMILY</scope>
    <scope>REVIEW</scope>
</reference>
<reference key="6">
    <citation type="journal article" date="2008" name="J. Proteome Res.">
        <title>Site-specific phosphorylation profiling of Arabidopsis proteins by mass spectrometry and peptide chip analysis.</title>
        <authorList>
            <person name="de la Fuente van Bentem S."/>
            <person name="Anrather D."/>
            <person name="Dohnal I."/>
            <person name="Roitinger E."/>
            <person name="Csaszar E."/>
            <person name="Joore J."/>
            <person name="Buijnink J."/>
            <person name="Carreri A."/>
            <person name="Forzani C."/>
            <person name="Lorkovic Z.J."/>
            <person name="Barta A."/>
            <person name="Lecourieux D."/>
            <person name="Verhounig A."/>
            <person name="Jonak C."/>
            <person name="Hirt H."/>
        </authorList>
    </citation>
    <scope>PHOSPHORYLATION [LARGE SCALE ANALYSIS] AT SER-377 AND SER-378</scope>
    <scope>IDENTIFICATION BY MASS SPECTROMETRY [LARGE SCALE ANALYSIS]</scope>
    <source>
        <tissue>Root</tissue>
    </source>
</reference>
<reference key="7">
    <citation type="journal article" date="2009" name="J. Proteomics">
        <title>Phosphoproteomic analysis of nuclei-enriched fractions from Arabidopsis thaliana.</title>
        <authorList>
            <person name="Jones A.M.E."/>
            <person name="MacLean D."/>
            <person name="Studholme D.J."/>
            <person name="Serna-Sanz A."/>
            <person name="Andreasson E."/>
            <person name="Rathjen J.P."/>
            <person name="Peck S.C."/>
        </authorList>
    </citation>
    <scope>IDENTIFICATION BY MASS SPECTROMETRY [LARGE SCALE ANALYSIS]</scope>
    <source>
        <strain>cv. Columbia</strain>
    </source>
</reference>
<reference key="8">
    <citation type="journal article" date="2009" name="Plant Physiol.">
        <title>Large-scale Arabidopsis phosphoproteome profiling reveals novel chloroplast kinase substrates and phosphorylation networks.</title>
        <authorList>
            <person name="Reiland S."/>
            <person name="Messerli G."/>
            <person name="Baerenfaller K."/>
            <person name="Gerrits B."/>
            <person name="Endler A."/>
            <person name="Grossmann J."/>
            <person name="Gruissem W."/>
            <person name="Baginsky S."/>
        </authorList>
    </citation>
    <scope>PHOSPHORYLATION [LARGE SCALE ANALYSIS] AT SER-377 AND SER-378</scope>
    <scope>IDENTIFICATION BY MASS SPECTROMETRY [LARGE SCALE ANALYSIS]</scope>
</reference>
<reference key="9">
    <citation type="journal article" date="2011" name="Front. Plant Sci.">
        <title>Protein-protein interaction network and subcellular localization of the Arabidopsis thaliana ESCRT machinery.</title>
        <authorList>
            <person name="Richardson L.G."/>
            <person name="Howard A.S."/>
            <person name="Khuu N."/>
            <person name="Gidda S.K."/>
            <person name="McCartney A."/>
            <person name="Morphy B.J."/>
            <person name="Mullen R.T."/>
        </authorList>
    </citation>
    <scope>GENE FAMILY</scope>
    <scope>NOMENCLATURE</scope>
    <scope>SUBCELLULAR LOCATION</scope>
</reference>
<reference key="10">
    <citation type="journal article" date="2013" name="Curr. Biol.">
        <title>Arabidopsis TOL proteins act as gatekeepers for vacuolar sorting of PIN2 plasma membrane protein.</title>
        <authorList>
            <person name="Korbei B."/>
            <person name="Moulinier-Anzola J."/>
            <person name="De-Araujo L."/>
            <person name="Lucyshyn D."/>
            <person name="Retzer K."/>
            <person name="Khan M.A."/>
            <person name="Luschnig C."/>
        </authorList>
    </citation>
    <scope>GENE FAMILY</scope>
    <scope>NOMENCLATURE</scope>
    <scope>FUNCTION</scope>
</reference>
<reference key="11">
    <citation type="journal article" date="2014" name="Plant Signal. Behav.">
        <title>Expression of Arabidopsis TOL genes.</title>
        <authorList>
            <person name="Moulinier-Anzola J."/>
            <person name="De-Araujo L."/>
            <person name="Korbei B."/>
        </authorList>
    </citation>
    <scope>TISSUE SPECIFICITY</scope>
</reference>
<name>TOL2_ARATH</name>
<proteinExistence type="evidence at protein level"/>
<dbReference type="EMBL" id="AC025290">
    <property type="protein sequence ID" value="AAF80218.1"/>
    <property type="molecule type" value="Genomic_DNA"/>
</dbReference>
<dbReference type="EMBL" id="CP002684">
    <property type="protein sequence ID" value="AEE27960.1"/>
    <property type="molecule type" value="Genomic_DNA"/>
</dbReference>
<dbReference type="EMBL" id="CP002684">
    <property type="protein sequence ID" value="AEE27959.1"/>
    <property type="molecule type" value="Genomic_DNA"/>
</dbReference>
<dbReference type="EMBL" id="AY052723">
    <property type="protein sequence ID" value="AAK96627.1"/>
    <property type="molecule type" value="mRNA"/>
</dbReference>
<dbReference type="EMBL" id="BT000578">
    <property type="protein sequence ID" value="AAN18147.1"/>
    <property type="molecule type" value="mRNA"/>
</dbReference>
<dbReference type="EMBL" id="BX816443">
    <property type="status" value="NOT_ANNOTATED_CDS"/>
    <property type="molecule type" value="mRNA"/>
</dbReference>
<dbReference type="PIR" id="G86197">
    <property type="entry name" value="G86197"/>
</dbReference>
<dbReference type="RefSeq" id="NP_563762.1">
    <molecule id="Q9LNC6-1"/>
    <property type="nucleotide sequence ID" value="NM_100502.4"/>
</dbReference>
<dbReference type="RefSeq" id="NP_973770.1">
    <molecule id="Q9LNC6-2"/>
    <property type="nucleotide sequence ID" value="NM_202041.2"/>
</dbReference>
<dbReference type="SMR" id="Q9LNC6"/>
<dbReference type="FunCoup" id="Q9LNC6">
    <property type="interactions" value="487"/>
</dbReference>
<dbReference type="STRING" id="3702.Q9LNC6"/>
<dbReference type="iPTMnet" id="Q9LNC6"/>
<dbReference type="PaxDb" id="3702-AT1G06210.1"/>
<dbReference type="ProteomicsDB" id="232432">
    <molecule id="Q9LNC6-1"/>
</dbReference>
<dbReference type="EnsemblPlants" id="AT1G06210.1">
    <molecule id="Q9LNC6-1"/>
    <property type="protein sequence ID" value="AT1G06210.1"/>
    <property type="gene ID" value="AT1G06210"/>
</dbReference>
<dbReference type="EnsemblPlants" id="AT1G06210.2">
    <molecule id="Q9LNC6-2"/>
    <property type="protein sequence ID" value="AT1G06210.2"/>
    <property type="gene ID" value="AT1G06210"/>
</dbReference>
<dbReference type="GeneID" id="837130"/>
<dbReference type="Gramene" id="AT1G06210.1">
    <molecule id="Q9LNC6-1"/>
    <property type="protein sequence ID" value="AT1G06210.1"/>
    <property type="gene ID" value="AT1G06210"/>
</dbReference>
<dbReference type="Gramene" id="AT1G06210.2">
    <molecule id="Q9LNC6-2"/>
    <property type="protein sequence ID" value="AT1G06210.2"/>
    <property type="gene ID" value="AT1G06210"/>
</dbReference>
<dbReference type="KEGG" id="ath:AT1G06210"/>
<dbReference type="Araport" id="AT1G06210"/>
<dbReference type="TAIR" id="AT1G06210"/>
<dbReference type="eggNOG" id="KOG1087">
    <property type="taxonomic scope" value="Eukaryota"/>
</dbReference>
<dbReference type="InParanoid" id="Q9LNC6"/>
<dbReference type="OMA" id="GYLPVFH"/>
<dbReference type="OrthoDB" id="2018246at2759"/>
<dbReference type="PhylomeDB" id="Q9LNC6"/>
<dbReference type="PRO" id="PR:Q9LNC6"/>
<dbReference type="Proteomes" id="UP000006548">
    <property type="component" value="Chromosome 1"/>
</dbReference>
<dbReference type="ExpressionAtlas" id="Q9LNC6">
    <property type="expression patterns" value="baseline and differential"/>
</dbReference>
<dbReference type="GO" id="GO:0005737">
    <property type="term" value="C:cytoplasm"/>
    <property type="evidence" value="ECO:0000314"/>
    <property type="project" value="UniProtKB"/>
</dbReference>
<dbReference type="GO" id="GO:0016020">
    <property type="term" value="C:membrane"/>
    <property type="evidence" value="ECO:0007669"/>
    <property type="project" value="UniProtKB-SubCell"/>
</dbReference>
<dbReference type="GO" id="GO:0035091">
    <property type="term" value="F:phosphatidylinositol binding"/>
    <property type="evidence" value="ECO:0007669"/>
    <property type="project" value="InterPro"/>
</dbReference>
<dbReference type="GO" id="GO:0043130">
    <property type="term" value="F:ubiquitin binding"/>
    <property type="evidence" value="ECO:0000314"/>
    <property type="project" value="UniProtKB"/>
</dbReference>
<dbReference type="GO" id="GO:0043328">
    <property type="term" value="P:protein transport to vacuole involved in ubiquitin-dependent protein catabolic process via the multivesicular body sorting pathway"/>
    <property type="evidence" value="ECO:0007669"/>
    <property type="project" value="InterPro"/>
</dbReference>
<dbReference type="CDD" id="cd14231">
    <property type="entry name" value="GAT_GGA-like_plant"/>
    <property type="match status" value="1"/>
</dbReference>
<dbReference type="CDD" id="cd03561">
    <property type="entry name" value="VHS"/>
    <property type="match status" value="1"/>
</dbReference>
<dbReference type="FunFam" id="1.25.40.90:FF:000038">
    <property type="entry name" value="TOM1-like protein 2"/>
    <property type="match status" value="1"/>
</dbReference>
<dbReference type="Gene3D" id="1.20.58.160">
    <property type="match status" value="1"/>
</dbReference>
<dbReference type="Gene3D" id="1.25.40.90">
    <property type="match status" value="1"/>
</dbReference>
<dbReference type="InterPro" id="IPR008942">
    <property type="entry name" value="ENTH_VHS"/>
</dbReference>
<dbReference type="InterPro" id="IPR004152">
    <property type="entry name" value="GAT_dom"/>
</dbReference>
<dbReference type="InterPro" id="IPR038425">
    <property type="entry name" value="GAT_sf"/>
</dbReference>
<dbReference type="InterPro" id="IPR044836">
    <property type="entry name" value="TOL_plant"/>
</dbReference>
<dbReference type="InterPro" id="IPR002014">
    <property type="entry name" value="VHS_dom"/>
</dbReference>
<dbReference type="PANTHER" id="PTHR46646">
    <property type="entry name" value="TOM1-LIKE PROTEIN 1"/>
    <property type="match status" value="1"/>
</dbReference>
<dbReference type="PANTHER" id="PTHR46646:SF5">
    <property type="entry name" value="TOM1-LIKE PROTEIN 2"/>
    <property type="match status" value="1"/>
</dbReference>
<dbReference type="Pfam" id="PF03127">
    <property type="entry name" value="GAT"/>
    <property type="match status" value="1"/>
</dbReference>
<dbReference type="Pfam" id="PF00790">
    <property type="entry name" value="VHS"/>
    <property type="match status" value="1"/>
</dbReference>
<dbReference type="SMART" id="SM00288">
    <property type="entry name" value="VHS"/>
    <property type="match status" value="1"/>
</dbReference>
<dbReference type="SUPFAM" id="SSF48464">
    <property type="entry name" value="ENTH/VHS domain"/>
    <property type="match status" value="1"/>
</dbReference>
<dbReference type="SUPFAM" id="SSF89009">
    <property type="entry name" value="GAT-like domain"/>
    <property type="match status" value="1"/>
</dbReference>
<dbReference type="PROSITE" id="PS50909">
    <property type="entry name" value="GAT"/>
    <property type="match status" value="1"/>
</dbReference>
<dbReference type="PROSITE" id="PS50179">
    <property type="entry name" value="VHS"/>
    <property type="match status" value="1"/>
</dbReference>
<organism>
    <name type="scientific">Arabidopsis thaliana</name>
    <name type="common">Mouse-ear cress</name>
    <dbReference type="NCBI Taxonomy" id="3702"/>
    <lineage>
        <taxon>Eukaryota</taxon>
        <taxon>Viridiplantae</taxon>
        <taxon>Streptophyta</taxon>
        <taxon>Embryophyta</taxon>
        <taxon>Tracheophyta</taxon>
        <taxon>Spermatophyta</taxon>
        <taxon>Magnoliopsida</taxon>
        <taxon>eudicotyledons</taxon>
        <taxon>Gunneridae</taxon>
        <taxon>Pentapetalae</taxon>
        <taxon>rosids</taxon>
        <taxon>malvids</taxon>
        <taxon>Brassicales</taxon>
        <taxon>Brassicaceae</taxon>
        <taxon>Camelineae</taxon>
        <taxon>Arabidopsis</taxon>
    </lineage>
</organism>
<keyword id="KW-0025">Alternative splicing</keyword>
<keyword id="KW-0963">Cytoplasm</keyword>
<keyword id="KW-0472">Membrane</keyword>
<keyword id="KW-0597">Phosphoprotein</keyword>
<keyword id="KW-0653">Protein transport</keyword>
<keyword id="KW-1185">Reference proteome</keyword>
<keyword id="KW-0813">Transport</keyword>
<protein>
    <recommendedName>
        <fullName evidence="9">TOM1-like protein 2</fullName>
    </recommendedName>
</protein>
<comment type="function">
    <text evidence="5 10">Binds ubiquitin in vitro (PubMed:24316203). Might contribute to the loading of the ESCRT machinery (Probable).</text>
</comment>
<comment type="subcellular location">
    <subcellularLocation>
        <location evidence="4">Cytoplasm</location>
    </subcellularLocation>
    <subcellularLocation>
        <location evidence="9">Membrane</location>
        <topology evidence="9">Peripheral membrane protein</topology>
    </subcellularLocation>
</comment>
<comment type="alternative products">
    <event type="alternative splicing"/>
    <isoform>
        <id>Q9LNC6-1</id>
        <name>1</name>
        <sequence type="displayed"/>
    </isoform>
    <isoform>
        <id>Q9LNC6-2</id>
        <name>2</name>
        <sequence type="described" ref="VSP_058983 VSP_058984"/>
    </isoform>
</comment>
<comment type="tissue specificity">
    <text evidence="6">Ubiquitously expressed.</text>
</comment>
<comment type="similarity">
    <text evidence="9">Belongs to the TOM1 family.</text>
</comment>
<sequence length="383" mass="42797">MDKLKIAEWGEKLKTGGAQMSRMVSEKVKDMLQAPTLESKMVDEATLETLEEPNWGMNMRICAQINNDEFNGTEIVRAIKRKISGKSPVSQRLSLELLEACAMNCEKVFSEVASEKVLDEMVWLIKNGEADSENRKRAFQLIRAWGQSQDLTYLPVFHQTYMSLEGENGLHARGEENSMPGQSSLESLMQRPVPVPPPGSYPVPNQEQALGDDDGLDYNFGNLSIKDKKEQIEITRNSLELLSSMLNTEGKPNHTEDDLTVSLMEKCKQSQPLIQMIIESTTDDEGVLFEALHLNDELQQVLSSYKKPDETEKKASIVEQESSGSKDTGPKPTEQEEQEPVKKTGADDDKKHSEASGSSNKTVKEEKQAVKIELGLSSDEDEK</sequence>
<evidence type="ECO:0000255" key="1">
    <source>
        <dbReference type="PROSITE-ProRule" id="PRU00218"/>
    </source>
</evidence>
<evidence type="ECO:0000255" key="2">
    <source>
        <dbReference type="PROSITE-ProRule" id="PRU00373"/>
    </source>
</evidence>
<evidence type="ECO:0000256" key="3">
    <source>
        <dbReference type="SAM" id="MobiDB-lite"/>
    </source>
</evidence>
<evidence type="ECO:0000269" key="4">
    <source>
    </source>
</evidence>
<evidence type="ECO:0000269" key="5">
    <source>
    </source>
</evidence>
<evidence type="ECO:0000269" key="6">
    <source>
    </source>
</evidence>
<evidence type="ECO:0000303" key="7">
    <source>
    </source>
</evidence>
<evidence type="ECO:0000303" key="8">
    <source>
    </source>
</evidence>
<evidence type="ECO:0000305" key="9"/>
<evidence type="ECO:0000305" key="10">
    <source>
    </source>
</evidence>
<evidence type="ECO:0000312" key="11">
    <source>
        <dbReference type="Araport" id="AT1G06210"/>
    </source>
</evidence>
<evidence type="ECO:0000312" key="12">
    <source>
        <dbReference type="EMBL" id="AAF80218.1"/>
    </source>
</evidence>
<evidence type="ECO:0007744" key="13">
    <source>
    </source>
</evidence>
<evidence type="ECO:0007744" key="14">
    <source>
    </source>
</evidence>
<accession>Q9LNC6</accession>
<accession>F4IC14</accession>